<sequence>MCMTDPVADMLTRIRNAGMAKHQKVDIPSSNLKVSLATVLRAEGFIKNFKVIADNKQGILRVYLKFIDEKEPVINEIKRISKPGGRVYVNSDKIKQVKNGLGVAILSTSKGLVTDKTAREMGIGGEVLCTVW</sequence>
<gene>
    <name evidence="1" type="primary">rpsH</name>
    <name type="ordered locus">Gbem_0947</name>
</gene>
<evidence type="ECO:0000255" key="1">
    <source>
        <dbReference type="HAMAP-Rule" id="MF_01302"/>
    </source>
</evidence>
<evidence type="ECO:0000305" key="2"/>
<reference key="1">
    <citation type="submission" date="2008-07" db="EMBL/GenBank/DDBJ databases">
        <title>Complete sequence of Geobacter bemidjiensis BEM.</title>
        <authorList>
            <consortium name="US DOE Joint Genome Institute"/>
            <person name="Lucas S."/>
            <person name="Copeland A."/>
            <person name="Lapidus A."/>
            <person name="Glavina del Rio T."/>
            <person name="Dalin E."/>
            <person name="Tice H."/>
            <person name="Bruce D."/>
            <person name="Goodwin L."/>
            <person name="Pitluck S."/>
            <person name="Kiss H."/>
            <person name="Brettin T."/>
            <person name="Detter J.C."/>
            <person name="Han C."/>
            <person name="Kuske C.R."/>
            <person name="Schmutz J."/>
            <person name="Larimer F."/>
            <person name="Land M."/>
            <person name="Hauser L."/>
            <person name="Kyrpides N."/>
            <person name="Lykidis A."/>
            <person name="Lovley D."/>
            <person name="Richardson P."/>
        </authorList>
    </citation>
    <scope>NUCLEOTIDE SEQUENCE [LARGE SCALE GENOMIC DNA]</scope>
    <source>
        <strain>ATCC BAA-1014 / DSM 16622 / JCM 12645 / Bem</strain>
    </source>
</reference>
<feature type="chain" id="PRO_1000140561" description="Small ribosomal subunit protein uS8">
    <location>
        <begin position="1"/>
        <end position="132"/>
    </location>
</feature>
<keyword id="KW-1185">Reference proteome</keyword>
<keyword id="KW-0687">Ribonucleoprotein</keyword>
<keyword id="KW-0689">Ribosomal protein</keyword>
<keyword id="KW-0694">RNA-binding</keyword>
<keyword id="KW-0699">rRNA-binding</keyword>
<dbReference type="EMBL" id="CP001124">
    <property type="protein sequence ID" value="ACH37968.1"/>
    <property type="molecule type" value="Genomic_DNA"/>
</dbReference>
<dbReference type="RefSeq" id="WP_012529380.1">
    <property type="nucleotide sequence ID" value="NC_011146.1"/>
</dbReference>
<dbReference type="SMR" id="B5EFR4"/>
<dbReference type="STRING" id="404380.Gbem_0947"/>
<dbReference type="KEGG" id="gbm:Gbem_0947"/>
<dbReference type="eggNOG" id="COG0096">
    <property type="taxonomic scope" value="Bacteria"/>
</dbReference>
<dbReference type="HOGENOM" id="CLU_098428_0_2_7"/>
<dbReference type="OrthoDB" id="9802617at2"/>
<dbReference type="Proteomes" id="UP000008825">
    <property type="component" value="Chromosome"/>
</dbReference>
<dbReference type="GO" id="GO:1990904">
    <property type="term" value="C:ribonucleoprotein complex"/>
    <property type="evidence" value="ECO:0007669"/>
    <property type="project" value="UniProtKB-KW"/>
</dbReference>
<dbReference type="GO" id="GO:0005840">
    <property type="term" value="C:ribosome"/>
    <property type="evidence" value="ECO:0007669"/>
    <property type="project" value="UniProtKB-KW"/>
</dbReference>
<dbReference type="GO" id="GO:0019843">
    <property type="term" value="F:rRNA binding"/>
    <property type="evidence" value="ECO:0007669"/>
    <property type="project" value="UniProtKB-UniRule"/>
</dbReference>
<dbReference type="GO" id="GO:0003735">
    <property type="term" value="F:structural constituent of ribosome"/>
    <property type="evidence" value="ECO:0007669"/>
    <property type="project" value="InterPro"/>
</dbReference>
<dbReference type="GO" id="GO:0006412">
    <property type="term" value="P:translation"/>
    <property type="evidence" value="ECO:0007669"/>
    <property type="project" value="UniProtKB-UniRule"/>
</dbReference>
<dbReference type="FunFam" id="3.30.1370.30:FF:000002">
    <property type="entry name" value="30S ribosomal protein S8"/>
    <property type="match status" value="1"/>
</dbReference>
<dbReference type="FunFam" id="3.30.1490.10:FF:000001">
    <property type="entry name" value="30S ribosomal protein S8"/>
    <property type="match status" value="1"/>
</dbReference>
<dbReference type="Gene3D" id="3.30.1370.30">
    <property type="match status" value="1"/>
</dbReference>
<dbReference type="Gene3D" id="3.30.1490.10">
    <property type="match status" value="1"/>
</dbReference>
<dbReference type="HAMAP" id="MF_01302_B">
    <property type="entry name" value="Ribosomal_uS8_B"/>
    <property type="match status" value="1"/>
</dbReference>
<dbReference type="InterPro" id="IPR000630">
    <property type="entry name" value="Ribosomal_uS8"/>
</dbReference>
<dbReference type="InterPro" id="IPR047863">
    <property type="entry name" value="Ribosomal_uS8_CS"/>
</dbReference>
<dbReference type="InterPro" id="IPR035987">
    <property type="entry name" value="Ribosomal_uS8_sf"/>
</dbReference>
<dbReference type="NCBIfam" id="NF001109">
    <property type="entry name" value="PRK00136.1"/>
    <property type="match status" value="1"/>
</dbReference>
<dbReference type="PANTHER" id="PTHR11758">
    <property type="entry name" value="40S RIBOSOMAL PROTEIN S15A"/>
    <property type="match status" value="1"/>
</dbReference>
<dbReference type="Pfam" id="PF00410">
    <property type="entry name" value="Ribosomal_S8"/>
    <property type="match status" value="1"/>
</dbReference>
<dbReference type="SUPFAM" id="SSF56047">
    <property type="entry name" value="Ribosomal protein S8"/>
    <property type="match status" value="1"/>
</dbReference>
<dbReference type="PROSITE" id="PS00053">
    <property type="entry name" value="RIBOSOMAL_S8"/>
    <property type="match status" value="1"/>
</dbReference>
<name>RS8_CITBB</name>
<comment type="function">
    <text evidence="1">One of the primary rRNA binding proteins, it binds directly to 16S rRNA central domain where it helps coordinate assembly of the platform of the 30S subunit.</text>
</comment>
<comment type="subunit">
    <text evidence="1">Part of the 30S ribosomal subunit. Contacts proteins S5 and S12.</text>
</comment>
<comment type="similarity">
    <text evidence="1">Belongs to the universal ribosomal protein uS8 family.</text>
</comment>
<accession>B5EFR4</accession>
<protein>
    <recommendedName>
        <fullName evidence="1">Small ribosomal subunit protein uS8</fullName>
    </recommendedName>
    <alternativeName>
        <fullName evidence="2">30S ribosomal protein S8</fullName>
    </alternativeName>
</protein>
<proteinExistence type="inferred from homology"/>
<organism>
    <name type="scientific">Citrifermentans bemidjiense (strain ATCC BAA-1014 / DSM 16622 / JCM 12645 / Bem)</name>
    <name type="common">Geobacter bemidjiensis</name>
    <dbReference type="NCBI Taxonomy" id="404380"/>
    <lineage>
        <taxon>Bacteria</taxon>
        <taxon>Pseudomonadati</taxon>
        <taxon>Thermodesulfobacteriota</taxon>
        <taxon>Desulfuromonadia</taxon>
        <taxon>Geobacterales</taxon>
        <taxon>Geobacteraceae</taxon>
        <taxon>Citrifermentans</taxon>
    </lineage>
</organism>